<dbReference type="EMBL" id="AK031785">
    <property type="protein sequence ID" value="BAC27548.1"/>
    <property type="molecule type" value="mRNA"/>
</dbReference>
<dbReference type="EMBL" id="AK032200">
    <property type="protein sequence ID" value="BAC27754.1"/>
    <property type="molecule type" value="mRNA"/>
</dbReference>
<dbReference type="EMBL" id="AK042867">
    <property type="protein sequence ID" value="BAC31387.2"/>
    <property type="molecule type" value="mRNA"/>
</dbReference>
<dbReference type="EMBL" id="BC024951">
    <property type="protein sequence ID" value="AAH24951.1"/>
    <property type="molecule type" value="mRNA"/>
</dbReference>
<dbReference type="CCDS" id="CCDS37733.1"/>
<dbReference type="RefSeq" id="NP_705780.1">
    <property type="nucleotide sequence ID" value="NM_153552.4"/>
</dbReference>
<dbReference type="SMR" id="Q8R3N6"/>
<dbReference type="BioGRID" id="230364">
    <property type="interactions" value="21"/>
</dbReference>
<dbReference type="FunCoup" id="Q8R3N6">
    <property type="interactions" value="4127"/>
</dbReference>
<dbReference type="IntAct" id="Q8R3N6">
    <property type="interactions" value="2"/>
</dbReference>
<dbReference type="STRING" id="10090.ENSMUSP00000025137"/>
<dbReference type="GlyGen" id="Q8R3N6">
    <property type="glycosylation" value="2 sites, 1 N-linked glycan (1 site)"/>
</dbReference>
<dbReference type="iPTMnet" id="Q8R3N6"/>
<dbReference type="PhosphoSitePlus" id="Q8R3N6"/>
<dbReference type="SwissPalm" id="Q8R3N6"/>
<dbReference type="jPOST" id="Q8R3N6"/>
<dbReference type="PaxDb" id="10090-ENSMUSP00000025137"/>
<dbReference type="PeptideAtlas" id="Q8R3N6"/>
<dbReference type="ProteomicsDB" id="262817"/>
<dbReference type="Pumba" id="Q8R3N6"/>
<dbReference type="Antibodypedia" id="4748">
    <property type="antibodies" value="351 antibodies from 32 providers"/>
</dbReference>
<dbReference type="DNASU" id="225160"/>
<dbReference type="Ensembl" id="ENSMUST00000025137.9">
    <property type="protein sequence ID" value="ENSMUSP00000025137.8"/>
    <property type="gene ID" value="ENSMUSG00000024287.9"/>
</dbReference>
<dbReference type="GeneID" id="225160"/>
<dbReference type="KEGG" id="mmu:225160"/>
<dbReference type="UCSC" id="uc008eal.1">
    <property type="organism name" value="mouse"/>
</dbReference>
<dbReference type="AGR" id="MGI:1919668"/>
<dbReference type="CTD" id="9984"/>
<dbReference type="MGI" id="MGI:1919668">
    <property type="gene designation" value="Thoc1"/>
</dbReference>
<dbReference type="VEuPathDB" id="HostDB:ENSMUSG00000024287"/>
<dbReference type="eggNOG" id="KOG2491">
    <property type="taxonomic scope" value="Eukaryota"/>
</dbReference>
<dbReference type="GeneTree" id="ENSGT00390000016232"/>
<dbReference type="HOGENOM" id="CLU_027906_0_0_1"/>
<dbReference type="InParanoid" id="Q8R3N6"/>
<dbReference type="OMA" id="LQREEMW"/>
<dbReference type="OrthoDB" id="10257415at2759"/>
<dbReference type="PhylomeDB" id="Q8R3N6"/>
<dbReference type="TreeFam" id="TF314796"/>
<dbReference type="Reactome" id="R-MMU-159236">
    <property type="pathway name" value="Transport of Mature mRNA derived from an Intron-Containing Transcript"/>
</dbReference>
<dbReference type="Reactome" id="R-MMU-72187">
    <property type="pathway name" value="mRNA 3'-end processing"/>
</dbReference>
<dbReference type="Reactome" id="R-MMU-73856">
    <property type="pathway name" value="RNA Polymerase II Transcription Termination"/>
</dbReference>
<dbReference type="BioGRID-ORCS" id="225160">
    <property type="hits" value="28 hits in 115 CRISPR screens"/>
</dbReference>
<dbReference type="ChiTaRS" id="Thoc1">
    <property type="organism name" value="mouse"/>
</dbReference>
<dbReference type="PRO" id="PR:Q8R3N6"/>
<dbReference type="Proteomes" id="UP000000589">
    <property type="component" value="Chromosome 18"/>
</dbReference>
<dbReference type="RNAct" id="Q8R3N6">
    <property type="molecule type" value="protein"/>
</dbReference>
<dbReference type="Bgee" id="ENSMUSG00000024287">
    <property type="expression patterns" value="Expressed in cumulus cell and 258 other cell types or tissues"/>
</dbReference>
<dbReference type="ExpressionAtlas" id="Q8R3N6">
    <property type="expression patterns" value="baseline and differential"/>
</dbReference>
<dbReference type="GO" id="GO:0000781">
    <property type="term" value="C:chromosome, telomeric region"/>
    <property type="evidence" value="ECO:0007669"/>
    <property type="project" value="Ensembl"/>
</dbReference>
<dbReference type="GO" id="GO:0005829">
    <property type="term" value="C:cytosol"/>
    <property type="evidence" value="ECO:0007669"/>
    <property type="project" value="UniProtKB-SubCell"/>
</dbReference>
<dbReference type="GO" id="GO:0016363">
    <property type="term" value="C:nuclear matrix"/>
    <property type="evidence" value="ECO:0007669"/>
    <property type="project" value="UniProtKB-SubCell"/>
</dbReference>
<dbReference type="GO" id="GO:0016607">
    <property type="term" value="C:nuclear speck"/>
    <property type="evidence" value="ECO:0007669"/>
    <property type="project" value="Ensembl"/>
</dbReference>
<dbReference type="GO" id="GO:0000445">
    <property type="term" value="C:THO complex part of transcription export complex"/>
    <property type="evidence" value="ECO:0007669"/>
    <property type="project" value="Ensembl"/>
</dbReference>
<dbReference type="GO" id="GO:0003677">
    <property type="term" value="F:DNA binding"/>
    <property type="evidence" value="ECO:0007669"/>
    <property type="project" value="UniProtKB-KW"/>
</dbReference>
<dbReference type="GO" id="GO:0003723">
    <property type="term" value="F:RNA binding"/>
    <property type="evidence" value="ECO:0007669"/>
    <property type="project" value="UniProtKB-KW"/>
</dbReference>
<dbReference type="GO" id="GO:0006915">
    <property type="term" value="P:apoptotic process"/>
    <property type="evidence" value="ECO:0007669"/>
    <property type="project" value="UniProtKB-KW"/>
</dbReference>
<dbReference type="GO" id="GO:0006406">
    <property type="term" value="P:mRNA export from nucleus"/>
    <property type="evidence" value="ECO:0000250"/>
    <property type="project" value="UniProtKB"/>
</dbReference>
<dbReference type="GO" id="GO:0006397">
    <property type="term" value="P:mRNA processing"/>
    <property type="evidence" value="ECO:0007669"/>
    <property type="project" value="UniProtKB-KW"/>
</dbReference>
<dbReference type="GO" id="GO:0008380">
    <property type="term" value="P:RNA splicing"/>
    <property type="evidence" value="ECO:0007669"/>
    <property type="project" value="UniProtKB-KW"/>
</dbReference>
<dbReference type="GO" id="GO:0007165">
    <property type="term" value="P:signal transduction"/>
    <property type="evidence" value="ECO:0007669"/>
    <property type="project" value="InterPro"/>
</dbReference>
<dbReference type="CDD" id="cd08318">
    <property type="entry name" value="Death_NMPP84"/>
    <property type="match status" value="1"/>
</dbReference>
<dbReference type="FunFam" id="1.10.533.10:FF:000025">
    <property type="entry name" value="THO complex subunit 1"/>
    <property type="match status" value="1"/>
</dbReference>
<dbReference type="Gene3D" id="1.10.533.10">
    <property type="entry name" value="Death Domain, Fas"/>
    <property type="match status" value="1"/>
</dbReference>
<dbReference type="InterPro" id="IPR011029">
    <property type="entry name" value="DEATH-like_dom_sf"/>
</dbReference>
<dbReference type="InterPro" id="IPR000488">
    <property type="entry name" value="Death_dom"/>
</dbReference>
<dbReference type="InterPro" id="IPR021861">
    <property type="entry name" value="THO_THOC1"/>
</dbReference>
<dbReference type="PANTHER" id="PTHR13265">
    <property type="entry name" value="THO COMPLEX SUBUNIT 1"/>
    <property type="match status" value="1"/>
</dbReference>
<dbReference type="PANTHER" id="PTHR13265:SF2">
    <property type="entry name" value="THO COMPLEX SUBUNIT 1"/>
    <property type="match status" value="1"/>
</dbReference>
<dbReference type="Pfam" id="PF00531">
    <property type="entry name" value="Death"/>
    <property type="match status" value="1"/>
</dbReference>
<dbReference type="Pfam" id="PF11957">
    <property type="entry name" value="efThoc1"/>
    <property type="match status" value="1"/>
</dbReference>
<dbReference type="SMART" id="SM00005">
    <property type="entry name" value="DEATH"/>
    <property type="match status" value="1"/>
</dbReference>
<dbReference type="SUPFAM" id="SSF47986">
    <property type="entry name" value="DEATH domain"/>
    <property type="match status" value="1"/>
</dbReference>
<dbReference type="PROSITE" id="PS50017">
    <property type="entry name" value="DEATH_DOMAIN"/>
    <property type="match status" value="1"/>
</dbReference>
<reference key="1">
    <citation type="journal article" date="2005" name="Science">
        <title>The transcriptional landscape of the mammalian genome.</title>
        <authorList>
            <person name="Carninci P."/>
            <person name="Kasukawa T."/>
            <person name="Katayama S."/>
            <person name="Gough J."/>
            <person name="Frith M.C."/>
            <person name="Maeda N."/>
            <person name="Oyama R."/>
            <person name="Ravasi T."/>
            <person name="Lenhard B."/>
            <person name="Wells C."/>
            <person name="Kodzius R."/>
            <person name="Shimokawa K."/>
            <person name="Bajic V.B."/>
            <person name="Brenner S.E."/>
            <person name="Batalov S."/>
            <person name="Forrest A.R."/>
            <person name="Zavolan M."/>
            <person name="Davis M.J."/>
            <person name="Wilming L.G."/>
            <person name="Aidinis V."/>
            <person name="Allen J.E."/>
            <person name="Ambesi-Impiombato A."/>
            <person name="Apweiler R."/>
            <person name="Aturaliya R.N."/>
            <person name="Bailey T.L."/>
            <person name="Bansal M."/>
            <person name="Baxter L."/>
            <person name="Beisel K.W."/>
            <person name="Bersano T."/>
            <person name="Bono H."/>
            <person name="Chalk A.M."/>
            <person name="Chiu K.P."/>
            <person name="Choudhary V."/>
            <person name="Christoffels A."/>
            <person name="Clutterbuck D.R."/>
            <person name="Crowe M.L."/>
            <person name="Dalla E."/>
            <person name="Dalrymple B.P."/>
            <person name="de Bono B."/>
            <person name="Della Gatta G."/>
            <person name="di Bernardo D."/>
            <person name="Down T."/>
            <person name="Engstrom P."/>
            <person name="Fagiolini M."/>
            <person name="Faulkner G."/>
            <person name="Fletcher C.F."/>
            <person name="Fukushima T."/>
            <person name="Furuno M."/>
            <person name="Futaki S."/>
            <person name="Gariboldi M."/>
            <person name="Georgii-Hemming P."/>
            <person name="Gingeras T.R."/>
            <person name="Gojobori T."/>
            <person name="Green R.E."/>
            <person name="Gustincich S."/>
            <person name="Harbers M."/>
            <person name="Hayashi Y."/>
            <person name="Hensch T.K."/>
            <person name="Hirokawa N."/>
            <person name="Hill D."/>
            <person name="Huminiecki L."/>
            <person name="Iacono M."/>
            <person name="Ikeo K."/>
            <person name="Iwama A."/>
            <person name="Ishikawa T."/>
            <person name="Jakt M."/>
            <person name="Kanapin A."/>
            <person name="Katoh M."/>
            <person name="Kawasawa Y."/>
            <person name="Kelso J."/>
            <person name="Kitamura H."/>
            <person name="Kitano H."/>
            <person name="Kollias G."/>
            <person name="Krishnan S.P."/>
            <person name="Kruger A."/>
            <person name="Kummerfeld S.K."/>
            <person name="Kurochkin I.V."/>
            <person name="Lareau L.F."/>
            <person name="Lazarevic D."/>
            <person name="Lipovich L."/>
            <person name="Liu J."/>
            <person name="Liuni S."/>
            <person name="McWilliam S."/>
            <person name="Madan Babu M."/>
            <person name="Madera M."/>
            <person name="Marchionni L."/>
            <person name="Matsuda H."/>
            <person name="Matsuzawa S."/>
            <person name="Miki H."/>
            <person name="Mignone F."/>
            <person name="Miyake S."/>
            <person name="Morris K."/>
            <person name="Mottagui-Tabar S."/>
            <person name="Mulder N."/>
            <person name="Nakano N."/>
            <person name="Nakauchi H."/>
            <person name="Ng P."/>
            <person name="Nilsson R."/>
            <person name="Nishiguchi S."/>
            <person name="Nishikawa S."/>
            <person name="Nori F."/>
            <person name="Ohara O."/>
            <person name="Okazaki Y."/>
            <person name="Orlando V."/>
            <person name="Pang K.C."/>
            <person name="Pavan W.J."/>
            <person name="Pavesi G."/>
            <person name="Pesole G."/>
            <person name="Petrovsky N."/>
            <person name="Piazza S."/>
            <person name="Reed J."/>
            <person name="Reid J.F."/>
            <person name="Ring B.Z."/>
            <person name="Ringwald M."/>
            <person name="Rost B."/>
            <person name="Ruan Y."/>
            <person name="Salzberg S.L."/>
            <person name="Sandelin A."/>
            <person name="Schneider C."/>
            <person name="Schoenbach C."/>
            <person name="Sekiguchi K."/>
            <person name="Semple C.A."/>
            <person name="Seno S."/>
            <person name="Sessa L."/>
            <person name="Sheng Y."/>
            <person name="Shibata Y."/>
            <person name="Shimada H."/>
            <person name="Shimada K."/>
            <person name="Silva D."/>
            <person name="Sinclair B."/>
            <person name="Sperling S."/>
            <person name="Stupka E."/>
            <person name="Sugiura K."/>
            <person name="Sultana R."/>
            <person name="Takenaka Y."/>
            <person name="Taki K."/>
            <person name="Tammoja K."/>
            <person name="Tan S.L."/>
            <person name="Tang S."/>
            <person name="Taylor M.S."/>
            <person name="Tegner J."/>
            <person name="Teichmann S.A."/>
            <person name="Ueda H.R."/>
            <person name="van Nimwegen E."/>
            <person name="Verardo R."/>
            <person name="Wei C.L."/>
            <person name="Yagi K."/>
            <person name="Yamanishi H."/>
            <person name="Zabarovsky E."/>
            <person name="Zhu S."/>
            <person name="Zimmer A."/>
            <person name="Hide W."/>
            <person name="Bult C."/>
            <person name="Grimmond S.M."/>
            <person name="Teasdale R.D."/>
            <person name="Liu E.T."/>
            <person name="Brusic V."/>
            <person name="Quackenbush J."/>
            <person name="Wahlestedt C."/>
            <person name="Mattick J.S."/>
            <person name="Hume D.A."/>
            <person name="Kai C."/>
            <person name="Sasaki D."/>
            <person name="Tomaru Y."/>
            <person name="Fukuda S."/>
            <person name="Kanamori-Katayama M."/>
            <person name="Suzuki M."/>
            <person name="Aoki J."/>
            <person name="Arakawa T."/>
            <person name="Iida J."/>
            <person name="Imamura K."/>
            <person name="Itoh M."/>
            <person name="Kato T."/>
            <person name="Kawaji H."/>
            <person name="Kawagashira N."/>
            <person name="Kawashima T."/>
            <person name="Kojima M."/>
            <person name="Kondo S."/>
            <person name="Konno H."/>
            <person name="Nakano K."/>
            <person name="Ninomiya N."/>
            <person name="Nishio T."/>
            <person name="Okada M."/>
            <person name="Plessy C."/>
            <person name="Shibata K."/>
            <person name="Shiraki T."/>
            <person name="Suzuki S."/>
            <person name="Tagami M."/>
            <person name="Waki K."/>
            <person name="Watahiki A."/>
            <person name="Okamura-Oho Y."/>
            <person name="Suzuki H."/>
            <person name="Kawai J."/>
            <person name="Hayashizaki Y."/>
        </authorList>
    </citation>
    <scope>NUCLEOTIDE SEQUENCE [LARGE SCALE MRNA]</scope>
    <source>
        <strain>C57BL/6J</strain>
        <tissue>Cerebellum</tissue>
        <tissue>Head</tissue>
        <tissue>Olfactory bulb</tissue>
    </source>
</reference>
<reference key="2">
    <citation type="journal article" date="2004" name="Genome Res.">
        <title>The status, quality, and expansion of the NIH full-length cDNA project: the Mammalian Gene Collection (MGC).</title>
        <authorList>
            <consortium name="The MGC Project Team"/>
        </authorList>
    </citation>
    <scope>NUCLEOTIDE SEQUENCE [LARGE SCALE MRNA]</scope>
    <source>
        <strain>Czech II</strain>
        <tissue>Mammary tumor</tissue>
    </source>
</reference>
<reference key="3">
    <citation type="journal article" date="2006" name="Mol. Cell. Biol.">
        <title>Thoc1/Hpr1/p84 is essential for early embryonic development in the mouse.</title>
        <authorList>
            <person name="Wang X."/>
            <person name="Chang Y."/>
            <person name="Li Y."/>
            <person name="Zhang X."/>
            <person name="Goodrich D.W."/>
        </authorList>
    </citation>
    <scope>FUNCTION</scope>
    <scope>DISRUPTION PHENOTYPE</scope>
    <scope>SUBCELLULAR LOCATION</scope>
    <scope>DEVELOPMENTAL STAGE</scope>
</reference>
<reference key="4">
    <citation type="journal article" date="2007" name="Oncogene">
        <title>FMIP controls the adipocyte lineage commitment of C2C12 cells by downmodulation of C/EBP alpha.</title>
        <authorList>
            <person name="Mancini A."/>
            <person name="El Bounkari O."/>
            <person name="Norrenbrock A.-F."/>
            <person name="Scherr M."/>
            <person name="Schaefer D."/>
            <person name="Eder M."/>
            <person name="Banham A.H."/>
            <person name="Pulford K."/>
            <person name="Lyne L."/>
            <person name="Whetton A.D."/>
            <person name="Tamura T."/>
        </authorList>
    </citation>
    <scope>INTERACTION WITH THOC5</scope>
</reference>
<reference key="5">
    <citation type="journal article" date="2007" name="Proc. Natl. Acad. Sci. U.S.A.">
        <title>Large-scale phosphorylation analysis of mouse liver.</title>
        <authorList>
            <person name="Villen J."/>
            <person name="Beausoleil S.A."/>
            <person name="Gerber S.A."/>
            <person name="Gygi S.P."/>
        </authorList>
    </citation>
    <scope>PHOSPHORYLATION [LARGE SCALE ANALYSIS] AT SER-560</scope>
    <scope>IDENTIFICATION BY MASS SPECTROMETRY [LARGE SCALE ANALYSIS]</scope>
    <source>
        <tissue>Liver</tissue>
    </source>
</reference>
<reference key="6">
    <citation type="journal article" date="2009" name="Mol. Cell. Biol.">
        <title>Thoc1 deficiency compromises gene expression necessary for normal testis development in the mouse.</title>
        <authorList>
            <person name="Wang X."/>
            <person name="Chinnam M."/>
            <person name="Wang J."/>
            <person name="Wang Y."/>
            <person name="Zhang X."/>
            <person name="Marcon E."/>
            <person name="Moens P."/>
            <person name="Goodrich D.W."/>
        </authorList>
    </citation>
    <scope>FUNCTION</scope>
    <scope>DISRUPTION PHENOTYPE</scope>
</reference>
<reference key="7">
    <citation type="journal article" date="2010" name="Cell">
        <title>A tissue-specific atlas of mouse protein phosphorylation and expression.</title>
        <authorList>
            <person name="Huttlin E.L."/>
            <person name="Jedrychowski M.P."/>
            <person name="Elias J.E."/>
            <person name="Goswami T."/>
            <person name="Rad R."/>
            <person name="Beausoleil S.A."/>
            <person name="Villen J."/>
            <person name="Haas W."/>
            <person name="Sowa M.E."/>
            <person name="Gygi S.P."/>
        </authorList>
    </citation>
    <scope>PHOSPHORYLATION [LARGE SCALE ANALYSIS] AT SER-560</scope>
    <scope>IDENTIFICATION BY MASS SPECTROMETRY [LARGE SCALE ANALYSIS]</scope>
    <source>
        <tissue>Kidney</tissue>
        <tissue>Liver</tissue>
        <tissue>Spleen</tissue>
    </source>
</reference>
<reference key="8">
    <citation type="journal article" date="2020" name="PLoS Genet.">
        <title>THOC1 deficiency leads to late-onset nonsyndromic hearing loss through p53-mediated hair cell apoptosis.</title>
        <authorList>
            <person name="Zhang L."/>
            <person name="Gao Y."/>
            <person name="Zhang R."/>
            <person name="Sun F."/>
            <person name="Cheng C."/>
            <person name="Qian F."/>
            <person name="Duan X."/>
            <person name="Wei G."/>
            <person name="Sun C."/>
            <person name="Pang X."/>
            <person name="Chen P."/>
            <person name="Chai R."/>
            <person name="Yang T."/>
            <person name="Wu H."/>
            <person name="Liu D."/>
        </authorList>
    </citation>
    <scope>SUBCELLULAR LOCATION</scope>
    <scope>TISSUE SPECIFICITY</scope>
</reference>
<keyword id="KW-0007">Acetylation</keyword>
<keyword id="KW-0053">Apoptosis</keyword>
<keyword id="KW-0963">Cytoplasm</keyword>
<keyword id="KW-0238">DNA-binding</keyword>
<keyword id="KW-1017">Isopeptide bond</keyword>
<keyword id="KW-0507">mRNA processing</keyword>
<keyword id="KW-0508">mRNA splicing</keyword>
<keyword id="KW-0509">mRNA transport</keyword>
<keyword id="KW-0539">Nucleus</keyword>
<keyword id="KW-0597">Phosphoprotein</keyword>
<keyword id="KW-1185">Reference proteome</keyword>
<keyword id="KW-0694">RNA-binding</keyword>
<keyword id="KW-0804">Transcription</keyword>
<keyword id="KW-0805">Transcription regulation</keyword>
<keyword id="KW-0813">Transport</keyword>
<keyword id="KW-0832">Ubl conjugation</keyword>
<proteinExistence type="evidence at protein level"/>
<sequence length="657" mass="75436">MSPTPALFSLPEARTRFTKSTREALNNKNIKPLLTAFSQLPGSENEKKCTLDQAFRGVLEEEIINHSACENVLAIISLAIGGVTESVCTASTPFVLLGDVLDCLPLDQCDTIFTFVEKNVATWKSNTFYSAGKNYLLRMCNDLLRRLSKSQNTVFCGRIQLFLARLFPLSEKSGLNLQSQFNLENVTVFNTNEQESTLGQKHTEDREEGMDVEEGEMGDDEAPTTCSIPIDYNLYRKFWSLQDYFRNPVQCYEKISWKTFLKYSEEVLAVFKSYKLDDTQASRKKMEELKTGGEHVYFAKFLTSEKLMDLQLSDSNFRRHILLQYLILFQYLKGQVKFKSSNYVLTDEQSLWIEDTTKSVYQLLSENPPDGERFSKMVEHILNTEENWNSWKNEGCPSFVKERASDTKPTRVVRKRAAPEDFLGKGPNKKILIGNEELTRLWNLCPDNMEACKSETREYMPTLEEFFEEAIEQADPENMVESEYKAVNNSNYGWRALRLLARRSPHFFQPTNQQFKSLPEYLENMVIKLAKELPPPSEEIKTGEDEDEEDNDALLKENESPDVRRDKPITGEQIESFANKLGEQWKILAPYLEIKDSDIRQIECDSEDMKMRAKQLLVAWQDQEGVHATTDNLISALNKSGLSDLAESLTNDTETNS</sequence>
<protein>
    <recommendedName>
        <fullName>THO complex subunit 1</fullName>
    </recommendedName>
    <alternativeName>
        <fullName>Nuclear matrix protein p84</fullName>
    </alternativeName>
</protein>
<organism>
    <name type="scientific">Mus musculus</name>
    <name type="common">Mouse</name>
    <dbReference type="NCBI Taxonomy" id="10090"/>
    <lineage>
        <taxon>Eukaryota</taxon>
        <taxon>Metazoa</taxon>
        <taxon>Chordata</taxon>
        <taxon>Craniata</taxon>
        <taxon>Vertebrata</taxon>
        <taxon>Euteleostomi</taxon>
        <taxon>Mammalia</taxon>
        <taxon>Eutheria</taxon>
        <taxon>Euarchontoglires</taxon>
        <taxon>Glires</taxon>
        <taxon>Rodentia</taxon>
        <taxon>Myomorpha</taxon>
        <taxon>Muroidea</taxon>
        <taxon>Muridae</taxon>
        <taxon>Murinae</taxon>
        <taxon>Mus</taxon>
        <taxon>Mus</taxon>
    </lineage>
</organism>
<name>THOC1_MOUSE</name>
<feature type="chain" id="PRO_0000072521" description="THO complex subunit 1">
    <location>
        <begin position="1"/>
        <end position="657"/>
    </location>
</feature>
<feature type="domain" description="Death" evidence="4">
    <location>
        <begin position="570"/>
        <end position="653"/>
    </location>
</feature>
<feature type="region of interest" description="Dock domain; interaction with THOC2" evidence="3">
    <location>
        <begin position="133"/>
        <end position="167"/>
    </location>
</feature>
<feature type="region of interest" description="Disordered" evidence="5">
    <location>
        <begin position="194"/>
        <end position="221"/>
    </location>
</feature>
<feature type="region of interest" description="Dock domain; interaction with THOC2" evidence="3">
    <location>
        <begin position="227"/>
        <end position="397"/>
    </location>
</feature>
<feature type="region of interest" description="Disordered" evidence="5">
    <location>
        <begin position="533"/>
        <end position="569"/>
    </location>
</feature>
<feature type="short sequence motif" description="Nuclear localization signal" evidence="3">
    <location>
        <begin position="414"/>
        <end position="430"/>
    </location>
</feature>
<feature type="compositionally biased region" description="Acidic residues" evidence="5">
    <location>
        <begin position="206"/>
        <end position="221"/>
    </location>
</feature>
<feature type="compositionally biased region" description="Basic and acidic residues" evidence="5">
    <location>
        <begin position="553"/>
        <end position="569"/>
    </location>
</feature>
<feature type="modified residue" description="N-acetylmethionine" evidence="3">
    <location>
        <position position="1"/>
    </location>
</feature>
<feature type="modified residue" description="Phosphoserine" evidence="3">
    <location>
        <position position="2"/>
    </location>
</feature>
<feature type="modified residue" description="Phosphothreonine" evidence="3">
    <location>
        <position position="4"/>
    </location>
</feature>
<feature type="modified residue" description="N6-acetyllysine" evidence="3">
    <location>
        <position position="133"/>
    </location>
</feature>
<feature type="modified residue" description="N6-acetyllysine" evidence="3">
    <location>
        <position position="300"/>
    </location>
</feature>
<feature type="modified residue" description="Phosphoserine" evidence="3">
    <location>
        <position position="537"/>
    </location>
</feature>
<feature type="modified residue" description="Phosphothreonine" evidence="3">
    <location>
        <position position="542"/>
    </location>
</feature>
<feature type="modified residue" description="Phosphoserine" evidence="11 12">
    <location>
        <position position="560"/>
    </location>
</feature>
<feature type="cross-link" description="Glycyl lysine isopeptide (Lys-Gly) (interchain with G-Cter in SUMO2)" evidence="3">
    <location>
        <position position="31"/>
    </location>
</feature>
<feature type="cross-link" description="Glycyl lysine isopeptide (Lys-Gly) (interchain with G-Cter in SUMO2)" evidence="3">
    <location>
        <position position="408"/>
    </location>
</feature>
<feature type="cross-link" description="Glycyl lysine isopeptide (Lys-Gly) (interchain with G-Cter in SUMO2)" evidence="3">
    <location>
        <position position="580"/>
    </location>
</feature>
<feature type="cross-link" description="Glycyl lysine isopeptide (Lys-Gly) (interchain with G-Cter in SUMO1); alternate" evidence="3">
    <location>
        <position position="595"/>
    </location>
</feature>
<feature type="cross-link" description="Glycyl lysine isopeptide (Lys-Gly) (interchain with G-Cter in SUMO2); alternate" evidence="3">
    <location>
        <position position="595"/>
    </location>
</feature>
<evidence type="ECO:0000250" key="1"/>
<evidence type="ECO:0000250" key="2">
    <source>
        <dbReference type="UniProtKB" id="Q7SYB2"/>
    </source>
</evidence>
<evidence type="ECO:0000250" key="3">
    <source>
        <dbReference type="UniProtKB" id="Q96FV9"/>
    </source>
</evidence>
<evidence type="ECO:0000255" key="4">
    <source>
        <dbReference type="PROSITE-ProRule" id="PRU00064"/>
    </source>
</evidence>
<evidence type="ECO:0000256" key="5">
    <source>
        <dbReference type="SAM" id="MobiDB-lite"/>
    </source>
</evidence>
<evidence type="ECO:0000269" key="6">
    <source>
    </source>
</evidence>
<evidence type="ECO:0000269" key="7">
    <source>
    </source>
</evidence>
<evidence type="ECO:0000269" key="8">
    <source>
    </source>
</evidence>
<evidence type="ECO:0000269" key="9">
    <source>
    </source>
</evidence>
<evidence type="ECO:0000305" key="10"/>
<evidence type="ECO:0007744" key="11">
    <source>
    </source>
</evidence>
<evidence type="ECO:0007744" key="12">
    <source>
    </source>
</evidence>
<accession>Q8R3N6</accession>
<accession>Q8BWD5</accession>
<accession>Q8BXY3</accession>
<gene>
    <name type="primary">Thoc1</name>
    <name type="synonym">Hpr1</name>
</gene>
<comment type="function">
    <text evidence="2 3">Component of the THO subcomplex of the TREX complex which is thought to couple mRNA transcription, processing and nuclear export, and which specifically associates with spliced mRNA and not with unspliced pre-mRNA (By similarity). Required for efficient export of polyadenylated RNA (By similarity). The THOC1-THOC2-THOC3 core complex alone is sufficient to bind export factor NXF1-NXT1 and promote ATPase activity of DDX39B (By similarity). TREX is recruited to spliced mRNAs by a transcription-independent mechanism, binds to mRNA upstream of the exon-junction complex (EJC) and is recruited in a splicing- and cap-dependent manner to a region near the 5' end of the mRNA where it functions in mRNA export to the cytoplasm via the TAP/NXF1 pathway (By similarity). Regulates transcriptional elongation of a subset of genes (By similarity). Involved in genome stability by preventing co-transcriptional R-loop formation (By similarity). May play a role in hair cell formation, hence may be involved in hearing (By similarity).</text>
</comment>
<comment type="function">
    <text evidence="1 6 8">Participates in an apoptotic pathway which is characterized by activation of caspase-6, increases in the expression of BAK1 and BCL2L1 and activation of NF-kappa-B. This pathway does not require p53/TP53, nor does the presence of p53/TP53 affect the efficiency of cell killing. Activates a G2/M cell cycle checkpoint prior to the onset of apoptosis. Apoptosis is inhibited by association with RB1 (By similarity). Essential for early embryonic development. Required for normal gene expression during postnatal testis development.</text>
</comment>
<comment type="subunit">
    <text evidence="2 7">Component of the THO subcomplex, which is composed of THOC1, THOC2, THOC3, THOC5, THOC6 and THOC7 (By similarity). The THO subcomplex interacts with DDX39B to form the THO-DDX39B complex which multimerizes into a 28-subunit tetrameric assembly (By similarity). Component of the transcription/export (TREX) complex at least composed of ALYREF/THOC4, DDX39B, SARNP/CIP29, CHTOP and the THO subcomplex; in the complex interacts with THOC2, THOC5 and THOC7 (By similarity). TREX seems to have a dynamic structure involving ATP-dependent remodeling (By similarity). Binds to the hypophosphorylated form of RB1. Interacts with RNA polymerase II. Interacts with LUZP4 (By similarity). Interacts with THOC5 (PubMed:16909111).</text>
</comment>
<comment type="subcellular location">
    <subcellularLocation>
        <location evidence="9">Nucleus</location>
    </subcellularLocation>
    <subcellularLocation>
        <location evidence="6">Nucleus</location>
        <location evidence="6">Nucleoplasm</location>
    </subcellularLocation>
    <subcellularLocation>
        <location evidence="1">Nucleus matrix</location>
    </subcellularLocation>
    <subcellularLocation>
        <location evidence="9">Cytoplasm</location>
        <location evidence="9">Cytosol</location>
    </subcellularLocation>
    <text evidence="1 9">Predominantly localized in the nucleus (PubMed:32776944). Shuttles between the nucleus and cytosol. Nuclear localization is required for induction of apoptotic cell death. Translocates to the cytoplasm during the early phase of apoptosis execution (By similarity).</text>
</comment>
<comment type="tissue specificity">
    <text evidence="9">In the inner ear, specifically expressed in inner and outer hair cells (at protein level).</text>
</comment>
<comment type="developmental stage">
    <text evidence="6">Widely expressed during embryonic development.</text>
</comment>
<comment type="domain">
    <text evidence="3">An intact death domain is needed for apoptosis.</text>
</comment>
<comment type="PTM">
    <text evidence="1">Expression is altered specifically during apoptosis and is accompanied by the appearance of novel forms with smaller apparent molecular mass.</text>
</comment>
<comment type="PTM">
    <text evidence="1">Polyubiquitinated, leading to proteasomal degradation; probably involves NEDD4.</text>
</comment>
<comment type="disruption phenotype">
    <text evidence="6 8">Mice show early embryonic lethality and severely diminished fertility.</text>
</comment>
<comment type="similarity">
    <text evidence="10">Belongs to the THOC1 family.</text>
</comment>